<proteinExistence type="inferred from homology"/>
<organism>
    <name type="scientific">Plasmodium falciparum (isolate 3D7)</name>
    <dbReference type="NCBI Taxonomy" id="36329"/>
    <lineage>
        <taxon>Eukaryota</taxon>
        <taxon>Sar</taxon>
        <taxon>Alveolata</taxon>
        <taxon>Apicomplexa</taxon>
        <taxon>Aconoidasida</taxon>
        <taxon>Haemosporida</taxon>
        <taxon>Plasmodiidae</taxon>
        <taxon>Plasmodium</taxon>
        <taxon>Plasmodium (Laverania)</taxon>
    </lineage>
</organism>
<dbReference type="EMBL" id="LN999944">
    <property type="protein sequence ID" value="CZT98416.1"/>
    <property type="molecule type" value="Genomic_DNA"/>
</dbReference>
<dbReference type="RefSeq" id="XP_001347444.1">
    <property type="nucleotide sequence ID" value="XM_001347408.1"/>
</dbReference>
<dbReference type="STRING" id="36329.Q8I6U8"/>
<dbReference type="DrugBank" id="DB11638">
    <property type="generic name" value="Artenimol"/>
</dbReference>
<dbReference type="SwissPalm" id="Q8I6U8"/>
<dbReference type="PaxDb" id="5833-PF10_0159"/>
<dbReference type="EnsemblProtists" id="CZT98416">
    <property type="protein sequence ID" value="CZT98416"/>
    <property type="gene ID" value="PF3D7_1016300"/>
</dbReference>
<dbReference type="GeneID" id="810317"/>
<dbReference type="KEGG" id="pfa:PF3D7_1016300"/>
<dbReference type="VEuPathDB" id="PlasmoDB:PF3D7_1016300"/>
<dbReference type="HOGENOM" id="CLU_343722_0_0_1"/>
<dbReference type="OMA" id="TKNDYGD"/>
<dbReference type="OrthoDB" id="376642at2759"/>
<dbReference type="PhylomeDB" id="Q8I6U8"/>
<dbReference type="Proteomes" id="UP000001450">
    <property type="component" value="Chromosome 10"/>
</dbReference>
<dbReference type="GO" id="GO:0009986">
    <property type="term" value="C:cell surface"/>
    <property type="evidence" value="ECO:0007669"/>
    <property type="project" value="UniProtKB-SubCell"/>
</dbReference>
<dbReference type="GO" id="GO:0005576">
    <property type="term" value="C:extracellular region"/>
    <property type="evidence" value="ECO:0007669"/>
    <property type="project" value="UniProtKB-SubCell"/>
</dbReference>
<dbReference type="GO" id="GO:0030430">
    <property type="term" value="C:host cell cytoplasm"/>
    <property type="evidence" value="ECO:0000314"/>
    <property type="project" value="GeneDB"/>
</dbReference>
<dbReference type="InterPro" id="IPR003681">
    <property type="entry name" value="Glycophorin-bd"/>
</dbReference>
<dbReference type="Pfam" id="PF02526">
    <property type="entry name" value="GBP_repeat"/>
    <property type="match status" value="12"/>
</dbReference>
<dbReference type="PROSITE" id="PS51069">
    <property type="entry name" value="GBP"/>
    <property type="match status" value="12"/>
</dbReference>
<comment type="function">
    <text evidence="1">Involved in merozoite invasion of host erythrocytes.</text>
</comment>
<comment type="subunit">
    <text evidence="1">Interacts with host glycophorin.</text>
</comment>
<comment type="subcellular location">
    <subcellularLocation>
        <location evidence="1">Secreted</location>
    </subcellularLocation>
    <subcellularLocation>
        <location evidence="1">Cell surface</location>
    </subcellularLocation>
    <subcellularLocation>
        <location evidence="4">Host cytoplasm</location>
    </subcellularLocation>
    <text evidence="1">Secreted at the schizont stage into the host erythrocyte cytoplasm. Localizes to the cell surface of free merozoites to some extent.</text>
</comment>
<comment type="domain">
    <text evidence="4">The PEXEL motif is involved in the protein translocation through the parasitophorous vacuole membrane and into the host erythrocyte cytoplasm.</text>
</comment>
<keyword id="KW-1035">Host cytoplasm</keyword>
<keyword id="KW-0461">Malaria</keyword>
<keyword id="KW-0477">Merozoite</keyword>
<keyword id="KW-1185">Reference proteome</keyword>
<keyword id="KW-0677">Repeat</keyword>
<keyword id="KW-0964">Secreted</keyword>
<name>GBP_PLAF7</name>
<accession>Q8I6U8</accession>
<accession>A0A143ZWU2</accession>
<feature type="chain" id="PRO_0000217185" description="Glycophorin-binding protein 130">
    <location>
        <begin position="1"/>
        <end position="824"/>
    </location>
</feature>
<feature type="repeat" description="GBP 1" evidence="2">
    <location>
        <begin position="226"/>
        <end position="275"/>
    </location>
</feature>
<feature type="repeat" description="GBP 2" evidence="2">
    <location>
        <begin position="276"/>
        <end position="325"/>
    </location>
</feature>
<feature type="repeat" description="GBP 3" evidence="2">
    <location>
        <begin position="326"/>
        <end position="375"/>
    </location>
</feature>
<feature type="repeat" description="GBP 4" evidence="2">
    <location>
        <begin position="376"/>
        <end position="424"/>
    </location>
</feature>
<feature type="repeat" description="GBP 5" evidence="2">
    <location>
        <begin position="425"/>
        <end position="474"/>
    </location>
</feature>
<feature type="repeat" description="GBP 6" evidence="2">
    <location>
        <begin position="475"/>
        <end position="524"/>
    </location>
</feature>
<feature type="repeat" description="GBP 7" evidence="2">
    <location>
        <begin position="525"/>
        <end position="574"/>
    </location>
</feature>
<feature type="repeat" description="GBP 8" evidence="2">
    <location>
        <begin position="575"/>
        <end position="624"/>
    </location>
</feature>
<feature type="repeat" description="GBP 9" evidence="2">
    <location>
        <begin position="625"/>
        <end position="674"/>
    </location>
</feature>
<feature type="repeat" description="GBP 10" evidence="2">
    <location>
        <begin position="675"/>
        <end position="724"/>
    </location>
</feature>
<feature type="repeat" description="GBP 11" evidence="2">
    <location>
        <begin position="725"/>
        <end position="774"/>
    </location>
</feature>
<feature type="repeat" description="GBP 12" evidence="2">
    <location>
        <begin position="775"/>
        <end position="824"/>
    </location>
</feature>
<feature type="region of interest" description="Disordered" evidence="3">
    <location>
        <begin position="97"/>
        <end position="236"/>
    </location>
</feature>
<feature type="region of interest" description="Disordered" evidence="3">
    <location>
        <begin position="258"/>
        <end position="291"/>
    </location>
</feature>
<feature type="region of interest" description="Disordered" evidence="3">
    <location>
        <begin position="310"/>
        <end position="334"/>
    </location>
</feature>
<feature type="region of interest" description="Disordered" evidence="3">
    <location>
        <begin position="358"/>
        <end position="384"/>
    </location>
</feature>
<feature type="region of interest" description="Disordered" evidence="3">
    <location>
        <begin position="408"/>
        <end position="431"/>
    </location>
</feature>
<feature type="region of interest" description="Disordered" evidence="3">
    <location>
        <begin position="457"/>
        <end position="482"/>
    </location>
</feature>
<feature type="region of interest" description="Disordered" evidence="3">
    <location>
        <begin position="507"/>
        <end position="532"/>
    </location>
</feature>
<feature type="region of interest" description="Disordered" evidence="3">
    <location>
        <begin position="559"/>
        <end position="582"/>
    </location>
</feature>
<feature type="region of interest" description="Disordered" evidence="3">
    <location>
        <begin position="659"/>
        <end position="683"/>
    </location>
</feature>
<feature type="region of interest" description="Disordered" evidence="3">
    <location>
        <begin position="711"/>
        <end position="733"/>
    </location>
</feature>
<feature type="region of interest" description="Disordered" evidence="3">
    <location>
        <begin position="759"/>
        <end position="783"/>
    </location>
</feature>
<feature type="short sequence motif" description="PEXEL motif" evidence="4">
    <location>
        <begin position="84"/>
        <end position="88"/>
    </location>
</feature>
<feature type="compositionally biased region" description="Basic and acidic residues" evidence="3">
    <location>
        <begin position="117"/>
        <end position="140"/>
    </location>
</feature>
<feature type="compositionally biased region" description="Basic and acidic residues" evidence="3">
    <location>
        <begin position="174"/>
        <end position="198"/>
    </location>
</feature>
<feature type="compositionally biased region" description="Polar residues" evidence="3">
    <location>
        <begin position="200"/>
        <end position="228"/>
    </location>
</feature>
<feature type="compositionally biased region" description="Basic and acidic residues" evidence="3">
    <location>
        <begin position="264"/>
        <end position="276"/>
    </location>
</feature>
<feature type="compositionally biased region" description="Basic and acidic residues" evidence="3">
    <location>
        <begin position="314"/>
        <end position="326"/>
    </location>
</feature>
<feature type="compositionally biased region" description="Basic and acidic residues" evidence="3">
    <location>
        <begin position="364"/>
        <end position="376"/>
    </location>
</feature>
<feature type="compositionally biased region" description="Basic and acidic residues" evidence="3">
    <location>
        <begin position="414"/>
        <end position="426"/>
    </location>
</feature>
<feature type="compositionally biased region" description="Basic and acidic residues" evidence="3">
    <location>
        <begin position="463"/>
        <end position="475"/>
    </location>
</feature>
<feature type="compositionally biased region" description="Basic and acidic residues" evidence="3">
    <location>
        <begin position="513"/>
        <end position="525"/>
    </location>
</feature>
<feature type="compositionally biased region" description="Basic and acidic residues" evidence="3">
    <location>
        <begin position="563"/>
        <end position="575"/>
    </location>
</feature>
<feature type="compositionally biased region" description="Basic and acidic residues" evidence="3">
    <location>
        <begin position="663"/>
        <end position="675"/>
    </location>
</feature>
<feature type="compositionally biased region" description="Basic and acidic residues" evidence="3">
    <location>
        <begin position="713"/>
        <end position="725"/>
    </location>
</feature>
<feature type="compositionally biased region" description="Basic and acidic residues" evidence="3">
    <location>
        <begin position="763"/>
        <end position="775"/>
    </location>
</feature>
<protein>
    <recommendedName>
        <fullName evidence="6">Glycophorin-binding protein 130</fullName>
        <shortName evidence="5">GBP130 protein</shortName>
    </recommendedName>
</protein>
<reference key="1">
    <citation type="journal article" date="2002" name="Nature">
        <title>Genome sequence of the human malaria parasite Plasmodium falciparum.</title>
        <authorList>
            <person name="Gardner M.J."/>
            <person name="Hall N."/>
            <person name="Fung E."/>
            <person name="White O."/>
            <person name="Berriman M."/>
            <person name="Hyman R.W."/>
            <person name="Carlton J.M."/>
            <person name="Pain A."/>
            <person name="Nelson K.E."/>
            <person name="Bowman S."/>
            <person name="Paulsen I.T."/>
            <person name="James K.D."/>
            <person name="Eisen J.A."/>
            <person name="Rutherford K.M."/>
            <person name="Salzberg S.L."/>
            <person name="Craig A."/>
            <person name="Kyes S."/>
            <person name="Chan M.-S."/>
            <person name="Nene V."/>
            <person name="Shallom S.J."/>
            <person name="Suh B."/>
            <person name="Peterson J."/>
            <person name="Angiuoli S."/>
            <person name="Pertea M."/>
            <person name="Allen J."/>
            <person name="Selengut J."/>
            <person name="Haft D."/>
            <person name="Mather M.W."/>
            <person name="Vaidya A.B."/>
            <person name="Martin D.M.A."/>
            <person name="Fairlamb A.H."/>
            <person name="Fraunholz M.J."/>
            <person name="Roos D.S."/>
            <person name="Ralph S.A."/>
            <person name="McFadden G.I."/>
            <person name="Cummings L.M."/>
            <person name="Subramanian G.M."/>
            <person name="Mungall C."/>
            <person name="Venter J.C."/>
            <person name="Carucci D.J."/>
            <person name="Hoffman S.L."/>
            <person name="Newbold C."/>
            <person name="Davis R.W."/>
            <person name="Fraser C.M."/>
            <person name="Barrell B.G."/>
        </authorList>
    </citation>
    <scope>NUCLEOTIDE SEQUENCE [LARGE SCALE GENOMIC DNA]</scope>
    <source>
        <strain>3D7</strain>
    </source>
</reference>
<reference key="2">
    <citation type="journal article" date="2004" name="Science">
        <title>Targeting malaria virulence and remodeling proteins to the host erythrocyte.</title>
        <authorList>
            <person name="Marti M."/>
            <person name="Good R.T."/>
            <person name="Rug M."/>
            <person name="Knuepfer E."/>
            <person name="Cowman A.F."/>
        </authorList>
    </citation>
    <scope>SUBCELLULAR LOCATION</scope>
    <scope>PEXEL MOTIF</scope>
</reference>
<gene>
    <name evidence="5" type="primary">GBP130</name>
    <name evidence="1" type="synonym">GBP</name>
    <name type="ORF">PF10_0159</name>
    <name type="ORF">PF3D7_1016300</name>
</gene>
<sequence>MRLSKVSDIKSTGVSNYKNFNSKNSSKYSLMEVSKKNEKKNSLGAFHSKKILLIFGIIYVVLLNAYICGDKYEKAVDYGFRESRILAEGEDTCARKEKTTLRKSKQKTSTRTVATQTKKDEENKSVVTEEQKVESDSEKQKRTKKVVKKQINIGDTENQKEGKNVKKVIKKEKKKEESGKPEENKHANEASKKQEPKASKVSQKPSTSTRSNNEVKIRAASNQETLTSADPEGQIMREYAADPEYRKHLEIFYKILTNTDPNDEVERRNADNKEDLTSADPEGQIMREYASDPEYRKHLEIFYKILTNTDPNDDVERRNADNKEDLTSADPEGQIMREYAADPEYRKHLEVFHKILTNTDPNDEVERRNADNKEDLTSADPEGQIMREYAADPEYRKHLEVFHKILTNTDPNDEVERRNADNKELTSSDPEGQIMREYAADPEYRKHLEVFHKILTNTDPNDEVERRNADNKEDLTSADPEGQIMREYAADPEYRKHLEVFHKILTNTDPNDEVERRNADNKEDLTSADPEGQIMREYAADPEYRKHLEIFHKILTNTDPNDEVERRNADNKEDLTSADPEGQIMREYAADPEYRKHLEIFYKILTNTDPNDEVERRNADNKEELTSSDPEGQIMREYAADPEYRKHLEIFHKILTNTDPNDEVERRNADNKEDLTSADPEGQIMREYAADPEYRKHLEIFYKILTNTDPNDEVERRNADNKEDLTSADPEGQIMREYASDPEYRKHLEIFYKILTNTDPNDDVERRNADNKEDLTSADPEGQIMREYAADPEYRKHLEVFHKILTNTDPNDEVERQNADNNEA</sequence>
<evidence type="ECO:0000250" key="1">
    <source>
        <dbReference type="UniProtKB" id="P02895"/>
    </source>
</evidence>
<evidence type="ECO:0000255" key="2">
    <source>
        <dbReference type="PROSITE-ProRule" id="PRU00402"/>
    </source>
</evidence>
<evidence type="ECO:0000256" key="3">
    <source>
        <dbReference type="SAM" id="MobiDB-lite"/>
    </source>
</evidence>
<evidence type="ECO:0000269" key="4">
    <source>
    </source>
</evidence>
<evidence type="ECO:0000303" key="5">
    <source>
    </source>
</evidence>
<evidence type="ECO:0000305" key="6"/>